<keyword id="KW-0687">Ribonucleoprotein</keyword>
<keyword id="KW-0689">Ribosomal protein</keyword>
<evidence type="ECO:0000255" key="1">
    <source>
        <dbReference type="HAMAP-Rule" id="MF_00502"/>
    </source>
</evidence>
<evidence type="ECO:0000305" key="2"/>
<protein>
    <recommendedName>
        <fullName evidence="1">Large ribosomal subunit protein bL31B</fullName>
    </recommendedName>
    <alternativeName>
        <fullName evidence="2">50S ribosomal protein L31 type B</fullName>
    </alternativeName>
</protein>
<sequence>MRRGIHPEYRPVVYRDRAADFAFLTRSTATSEQTIEWTDGNTYPVVDVQISSASHPFWTGRQRLVDAAGRVEKFRAKYARRGPQRHR</sequence>
<name>RL31B_SALAI</name>
<accession>A8M6K7</accession>
<feature type="chain" id="PRO_1000081456" description="Large ribosomal subunit protein bL31B">
    <location>
        <begin position="1"/>
        <end position="87"/>
    </location>
</feature>
<proteinExistence type="inferred from homology"/>
<organism>
    <name type="scientific">Salinispora arenicola (strain CNS-205)</name>
    <dbReference type="NCBI Taxonomy" id="391037"/>
    <lineage>
        <taxon>Bacteria</taxon>
        <taxon>Bacillati</taxon>
        <taxon>Actinomycetota</taxon>
        <taxon>Actinomycetes</taxon>
        <taxon>Micromonosporales</taxon>
        <taxon>Micromonosporaceae</taxon>
        <taxon>Salinispora</taxon>
    </lineage>
</organism>
<comment type="subunit">
    <text evidence="1">Part of the 50S ribosomal subunit.</text>
</comment>
<comment type="similarity">
    <text evidence="1">Belongs to the bacterial ribosomal protein bL31 family. Type B subfamily.</text>
</comment>
<reference key="1">
    <citation type="submission" date="2007-10" db="EMBL/GenBank/DDBJ databases">
        <title>Complete sequence of Salinispora arenicola CNS-205.</title>
        <authorList>
            <consortium name="US DOE Joint Genome Institute"/>
            <person name="Copeland A."/>
            <person name="Lucas S."/>
            <person name="Lapidus A."/>
            <person name="Barry K."/>
            <person name="Glavina del Rio T."/>
            <person name="Dalin E."/>
            <person name="Tice H."/>
            <person name="Pitluck S."/>
            <person name="Foster B."/>
            <person name="Schmutz J."/>
            <person name="Larimer F."/>
            <person name="Land M."/>
            <person name="Hauser L."/>
            <person name="Kyrpides N."/>
            <person name="Ivanova N."/>
            <person name="Jensen P.R."/>
            <person name="Moore B.S."/>
            <person name="Penn K."/>
            <person name="Jenkins C."/>
            <person name="Udwary D."/>
            <person name="Xiang L."/>
            <person name="Gontang E."/>
            <person name="Richardson P."/>
        </authorList>
    </citation>
    <scope>NUCLEOTIDE SEQUENCE [LARGE SCALE GENOMIC DNA]</scope>
    <source>
        <strain>CNS-205</strain>
    </source>
</reference>
<gene>
    <name evidence="1" type="primary">rpmE2</name>
    <name type="ordered locus">Sare_2901</name>
</gene>
<dbReference type="EMBL" id="CP000850">
    <property type="protein sequence ID" value="ABV98727.1"/>
    <property type="molecule type" value="Genomic_DNA"/>
</dbReference>
<dbReference type="SMR" id="A8M6K7"/>
<dbReference type="STRING" id="391037.Sare_2901"/>
<dbReference type="KEGG" id="saq:Sare_2901"/>
<dbReference type="PATRIC" id="fig|391037.6.peg.2933"/>
<dbReference type="eggNOG" id="COG0254">
    <property type="taxonomic scope" value="Bacteria"/>
</dbReference>
<dbReference type="HOGENOM" id="CLU_114306_2_2_11"/>
<dbReference type="OrthoDB" id="9803251at2"/>
<dbReference type="GO" id="GO:1990904">
    <property type="term" value="C:ribonucleoprotein complex"/>
    <property type="evidence" value="ECO:0007669"/>
    <property type="project" value="UniProtKB-KW"/>
</dbReference>
<dbReference type="GO" id="GO:0005840">
    <property type="term" value="C:ribosome"/>
    <property type="evidence" value="ECO:0007669"/>
    <property type="project" value="UniProtKB-KW"/>
</dbReference>
<dbReference type="GO" id="GO:0003735">
    <property type="term" value="F:structural constituent of ribosome"/>
    <property type="evidence" value="ECO:0007669"/>
    <property type="project" value="InterPro"/>
</dbReference>
<dbReference type="GO" id="GO:0006412">
    <property type="term" value="P:translation"/>
    <property type="evidence" value="ECO:0007669"/>
    <property type="project" value="UniProtKB-UniRule"/>
</dbReference>
<dbReference type="Gene3D" id="4.10.830.30">
    <property type="entry name" value="Ribosomal protein L31"/>
    <property type="match status" value="1"/>
</dbReference>
<dbReference type="HAMAP" id="MF_00502">
    <property type="entry name" value="Ribosomal_bL31_2"/>
    <property type="match status" value="1"/>
</dbReference>
<dbReference type="InterPro" id="IPR034704">
    <property type="entry name" value="Ribosomal_bL28/bL31-like_sf"/>
</dbReference>
<dbReference type="InterPro" id="IPR002150">
    <property type="entry name" value="Ribosomal_bL31"/>
</dbReference>
<dbReference type="InterPro" id="IPR027493">
    <property type="entry name" value="Ribosomal_bL31_B"/>
</dbReference>
<dbReference type="InterPro" id="IPR042105">
    <property type="entry name" value="Ribosomal_bL31_sf"/>
</dbReference>
<dbReference type="NCBIfam" id="TIGR00105">
    <property type="entry name" value="L31"/>
    <property type="match status" value="1"/>
</dbReference>
<dbReference type="NCBIfam" id="NF002462">
    <property type="entry name" value="PRK01678.1"/>
    <property type="match status" value="1"/>
</dbReference>
<dbReference type="PANTHER" id="PTHR33280">
    <property type="entry name" value="50S RIBOSOMAL PROTEIN L31, CHLOROPLASTIC"/>
    <property type="match status" value="1"/>
</dbReference>
<dbReference type="PANTHER" id="PTHR33280:SF1">
    <property type="entry name" value="LARGE RIBOSOMAL SUBUNIT PROTEIN BL31C"/>
    <property type="match status" value="1"/>
</dbReference>
<dbReference type="Pfam" id="PF01197">
    <property type="entry name" value="Ribosomal_L31"/>
    <property type="match status" value="1"/>
</dbReference>
<dbReference type="PRINTS" id="PR01249">
    <property type="entry name" value="RIBOSOMALL31"/>
</dbReference>
<dbReference type="SUPFAM" id="SSF143800">
    <property type="entry name" value="L28p-like"/>
    <property type="match status" value="1"/>
</dbReference>